<dbReference type="EC" id="6.5.1.2" evidence="1"/>
<dbReference type="EMBL" id="CP000016">
    <property type="protein sequence ID" value="AAZ41134.1"/>
    <property type="molecule type" value="Genomic_DNA"/>
</dbReference>
<dbReference type="RefSeq" id="WP_011283045.1">
    <property type="nucleotide sequence ID" value="NC_007292.1"/>
</dbReference>
<dbReference type="SMR" id="Q492G5"/>
<dbReference type="STRING" id="291272.BPEN_524"/>
<dbReference type="KEGG" id="bpn:BPEN_524"/>
<dbReference type="eggNOG" id="COG0272">
    <property type="taxonomic scope" value="Bacteria"/>
</dbReference>
<dbReference type="HOGENOM" id="CLU_007764_2_0_6"/>
<dbReference type="OrthoDB" id="9759736at2"/>
<dbReference type="Proteomes" id="UP000007794">
    <property type="component" value="Chromosome"/>
</dbReference>
<dbReference type="GO" id="GO:0005829">
    <property type="term" value="C:cytosol"/>
    <property type="evidence" value="ECO:0007669"/>
    <property type="project" value="TreeGrafter"/>
</dbReference>
<dbReference type="GO" id="GO:0003911">
    <property type="term" value="F:DNA ligase (NAD+) activity"/>
    <property type="evidence" value="ECO:0007669"/>
    <property type="project" value="UniProtKB-UniRule"/>
</dbReference>
<dbReference type="GO" id="GO:0046872">
    <property type="term" value="F:metal ion binding"/>
    <property type="evidence" value="ECO:0007669"/>
    <property type="project" value="UniProtKB-KW"/>
</dbReference>
<dbReference type="GO" id="GO:0006281">
    <property type="term" value="P:DNA repair"/>
    <property type="evidence" value="ECO:0007669"/>
    <property type="project" value="UniProtKB-KW"/>
</dbReference>
<dbReference type="GO" id="GO:0006260">
    <property type="term" value="P:DNA replication"/>
    <property type="evidence" value="ECO:0007669"/>
    <property type="project" value="UniProtKB-KW"/>
</dbReference>
<dbReference type="CDD" id="cd00114">
    <property type="entry name" value="LIGANc"/>
    <property type="match status" value="1"/>
</dbReference>
<dbReference type="FunFam" id="1.10.150.20:FF:000007">
    <property type="entry name" value="DNA ligase"/>
    <property type="match status" value="1"/>
</dbReference>
<dbReference type="FunFam" id="3.30.470.30:FF:000001">
    <property type="entry name" value="DNA ligase"/>
    <property type="match status" value="1"/>
</dbReference>
<dbReference type="Gene3D" id="6.20.10.30">
    <property type="match status" value="1"/>
</dbReference>
<dbReference type="Gene3D" id="1.10.150.20">
    <property type="entry name" value="5' to 3' exonuclease, C-terminal subdomain"/>
    <property type="match status" value="2"/>
</dbReference>
<dbReference type="Gene3D" id="3.30.470.30">
    <property type="entry name" value="DNA ligase/mRNA capping enzyme"/>
    <property type="match status" value="1"/>
</dbReference>
<dbReference type="Gene3D" id="1.10.287.610">
    <property type="entry name" value="Helix hairpin bin"/>
    <property type="match status" value="1"/>
</dbReference>
<dbReference type="Gene3D" id="2.40.50.140">
    <property type="entry name" value="Nucleic acid-binding proteins"/>
    <property type="match status" value="1"/>
</dbReference>
<dbReference type="HAMAP" id="MF_01588">
    <property type="entry name" value="DNA_ligase_A"/>
    <property type="match status" value="1"/>
</dbReference>
<dbReference type="InterPro" id="IPR041663">
    <property type="entry name" value="DisA/LigA_HHH"/>
</dbReference>
<dbReference type="InterPro" id="IPR001679">
    <property type="entry name" value="DNA_ligase"/>
</dbReference>
<dbReference type="InterPro" id="IPR018239">
    <property type="entry name" value="DNA_ligase_AS"/>
</dbReference>
<dbReference type="InterPro" id="IPR013839">
    <property type="entry name" value="DNAligase_adenylation"/>
</dbReference>
<dbReference type="InterPro" id="IPR013840">
    <property type="entry name" value="DNAligase_N"/>
</dbReference>
<dbReference type="InterPro" id="IPR012340">
    <property type="entry name" value="NA-bd_OB-fold"/>
</dbReference>
<dbReference type="InterPro" id="IPR004150">
    <property type="entry name" value="NAD_DNA_ligase_OB"/>
</dbReference>
<dbReference type="InterPro" id="IPR010994">
    <property type="entry name" value="RuvA_2-like"/>
</dbReference>
<dbReference type="NCBIfam" id="TIGR00575">
    <property type="entry name" value="dnlj"/>
    <property type="match status" value="1"/>
</dbReference>
<dbReference type="NCBIfam" id="NF005932">
    <property type="entry name" value="PRK07956.1"/>
    <property type="match status" value="1"/>
</dbReference>
<dbReference type="PANTHER" id="PTHR23389">
    <property type="entry name" value="CHROMOSOME TRANSMISSION FIDELITY FACTOR 18"/>
    <property type="match status" value="1"/>
</dbReference>
<dbReference type="PANTHER" id="PTHR23389:SF9">
    <property type="entry name" value="DNA LIGASE"/>
    <property type="match status" value="1"/>
</dbReference>
<dbReference type="Pfam" id="PF01653">
    <property type="entry name" value="DNA_ligase_aden"/>
    <property type="match status" value="1"/>
</dbReference>
<dbReference type="Pfam" id="PF03120">
    <property type="entry name" value="DNA_ligase_OB"/>
    <property type="match status" value="1"/>
</dbReference>
<dbReference type="Pfam" id="PF12826">
    <property type="entry name" value="HHH_2"/>
    <property type="match status" value="1"/>
</dbReference>
<dbReference type="Pfam" id="PF22745">
    <property type="entry name" value="Nlig-Ia"/>
    <property type="match status" value="1"/>
</dbReference>
<dbReference type="PIRSF" id="PIRSF001604">
    <property type="entry name" value="LigA"/>
    <property type="match status" value="1"/>
</dbReference>
<dbReference type="SMART" id="SM00532">
    <property type="entry name" value="LIGANc"/>
    <property type="match status" value="1"/>
</dbReference>
<dbReference type="SUPFAM" id="SSF56091">
    <property type="entry name" value="DNA ligase/mRNA capping enzyme, catalytic domain"/>
    <property type="match status" value="1"/>
</dbReference>
<dbReference type="SUPFAM" id="SSF50249">
    <property type="entry name" value="Nucleic acid-binding proteins"/>
    <property type="match status" value="1"/>
</dbReference>
<dbReference type="SUPFAM" id="SSF47781">
    <property type="entry name" value="RuvA domain 2-like"/>
    <property type="match status" value="1"/>
</dbReference>
<dbReference type="PROSITE" id="PS01055">
    <property type="entry name" value="DNA_LIGASE_N1"/>
    <property type="match status" value="1"/>
</dbReference>
<organism>
    <name type="scientific">Blochmanniella pennsylvanica (strain BPEN)</name>
    <dbReference type="NCBI Taxonomy" id="291272"/>
    <lineage>
        <taxon>Bacteria</taxon>
        <taxon>Pseudomonadati</taxon>
        <taxon>Pseudomonadota</taxon>
        <taxon>Gammaproteobacteria</taxon>
        <taxon>Enterobacterales</taxon>
        <taxon>Enterobacteriaceae</taxon>
        <taxon>ant endosymbionts</taxon>
        <taxon>Candidatus Blochmanniella</taxon>
    </lineage>
</organism>
<sequence>MKFVKQKIQKLRKKLRHWEYLYYTKNESAVSDEKYDAMLEKLNQLEQIYPHLIAESSPTQRIGGVSQYNFKKIHHKVPMLSLNSIVASFQLLSFDKRIKIKLHANHVMSYCCELKIDGVAVSLLYKEGKLIYAATRGDGKIGEDVTENISTIRAVPMCLKIDSNKYGKLPYLLEIRGEVFISKLCFLELNKITIQQGNKPFSNARNAASGSLRQLDPSVTATRPLSFYCYGISNYCGEKELPDSHWERLQLCENWGLPINNYIRLISGVNKVLEYYSYIKTIRSNLEFNIDGIVIKVNSCAYQSKLGCGSRAPHWALAYKFPSEVSSAKVDNVIFQVGRTGIITPIAYLEPIVISDVTIRKVNMHNINEVKRLGLMIGDTVRIQRSGDVIPKIVEVILSERTDHVKTIELPRFCPVCGSRIKTWRNQSILRCTAGLSCLAQRKATLEHFVSKKAMNIYGMGNKIIDQLVNQGLIFTSSDVFRLNKNKLLCLEGFGLENIERLLRSIEDSKKITLARFIYALGIYGVGETVASNLAIVYKTIENLAAADLQSLSNLKYVGPIIANNIYHFFRNPDNLKNVQDLIDPAIGIQLYVIT</sequence>
<comment type="function">
    <text evidence="1">DNA ligase that catalyzes the formation of phosphodiester linkages between 5'-phosphoryl and 3'-hydroxyl groups in double-stranded DNA using NAD as a coenzyme and as the energy source for the reaction. It is essential for DNA replication and repair of damaged DNA.</text>
</comment>
<comment type="catalytic activity">
    <reaction evidence="1">
        <text>NAD(+) + (deoxyribonucleotide)n-3'-hydroxyl + 5'-phospho-(deoxyribonucleotide)m = (deoxyribonucleotide)n+m + AMP + beta-nicotinamide D-nucleotide.</text>
        <dbReference type="EC" id="6.5.1.2"/>
    </reaction>
</comment>
<comment type="cofactor">
    <cofactor evidence="1">
        <name>Mg(2+)</name>
        <dbReference type="ChEBI" id="CHEBI:18420"/>
    </cofactor>
    <cofactor evidence="1">
        <name>Mn(2+)</name>
        <dbReference type="ChEBI" id="CHEBI:29035"/>
    </cofactor>
</comment>
<comment type="similarity">
    <text evidence="1">Belongs to the NAD-dependent DNA ligase family. LigA subfamily.</text>
</comment>
<proteinExistence type="inferred from homology"/>
<gene>
    <name evidence="1" type="primary">ligA</name>
    <name type="ordered locus">BPEN_524</name>
</gene>
<keyword id="KW-0227">DNA damage</keyword>
<keyword id="KW-0234">DNA repair</keyword>
<keyword id="KW-0235">DNA replication</keyword>
<keyword id="KW-0436">Ligase</keyword>
<keyword id="KW-0460">Magnesium</keyword>
<keyword id="KW-0464">Manganese</keyword>
<keyword id="KW-0479">Metal-binding</keyword>
<keyword id="KW-0520">NAD</keyword>
<keyword id="KW-1185">Reference proteome</keyword>
<keyword id="KW-0862">Zinc</keyword>
<reference key="1">
    <citation type="journal article" date="2005" name="Genome Res.">
        <title>Genome sequence of Blochmannia pennsylvanicus indicates parallel evolutionary trends among bacterial mutualists of insects.</title>
        <authorList>
            <person name="Degnan P.H."/>
            <person name="Lazarus A.B."/>
            <person name="Wernegreen J.J."/>
        </authorList>
    </citation>
    <scope>NUCLEOTIDE SEQUENCE [LARGE SCALE GENOMIC DNA]</scope>
    <source>
        <strain>BPEN</strain>
    </source>
</reference>
<protein>
    <recommendedName>
        <fullName evidence="1">DNA ligase</fullName>
        <ecNumber evidence="1">6.5.1.2</ecNumber>
    </recommendedName>
    <alternativeName>
        <fullName evidence="1">Polydeoxyribonucleotide synthase [NAD(+)]</fullName>
    </alternativeName>
</protein>
<accession>Q492G5</accession>
<name>DNLJ_BLOPB</name>
<feature type="chain" id="PRO_0000313142" description="DNA ligase">
    <location>
        <begin position="1"/>
        <end position="595"/>
    </location>
</feature>
<feature type="active site" description="N6-AMP-lysine intermediate" evidence="1">
    <location>
        <position position="115"/>
    </location>
</feature>
<feature type="binding site" evidence="1">
    <location>
        <begin position="32"/>
        <end position="36"/>
    </location>
    <ligand>
        <name>NAD(+)</name>
        <dbReference type="ChEBI" id="CHEBI:57540"/>
    </ligand>
</feature>
<feature type="binding site" evidence="1">
    <location>
        <begin position="81"/>
        <end position="82"/>
    </location>
    <ligand>
        <name>NAD(+)</name>
        <dbReference type="ChEBI" id="CHEBI:57540"/>
    </ligand>
</feature>
<feature type="binding site" evidence="1">
    <location>
        <position position="113"/>
    </location>
    <ligand>
        <name>NAD(+)</name>
        <dbReference type="ChEBI" id="CHEBI:57540"/>
    </ligand>
</feature>
<feature type="binding site" evidence="1">
    <location>
        <position position="136"/>
    </location>
    <ligand>
        <name>NAD(+)</name>
        <dbReference type="ChEBI" id="CHEBI:57540"/>
    </ligand>
</feature>
<feature type="binding site" evidence="1">
    <location>
        <position position="178"/>
    </location>
    <ligand>
        <name>NAD(+)</name>
        <dbReference type="ChEBI" id="CHEBI:57540"/>
    </ligand>
</feature>
<feature type="binding site" evidence="1">
    <location>
        <position position="296"/>
    </location>
    <ligand>
        <name>NAD(+)</name>
        <dbReference type="ChEBI" id="CHEBI:57540"/>
    </ligand>
</feature>
<feature type="binding site" evidence="1">
    <location>
        <position position="320"/>
    </location>
    <ligand>
        <name>NAD(+)</name>
        <dbReference type="ChEBI" id="CHEBI:57540"/>
    </ligand>
</feature>
<feature type="binding site" evidence="1">
    <location>
        <position position="414"/>
    </location>
    <ligand>
        <name>Zn(2+)</name>
        <dbReference type="ChEBI" id="CHEBI:29105"/>
    </ligand>
</feature>
<feature type="binding site" evidence="1">
    <location>
        <position position="417"/>
    </location>
    <ligand>
        <name>Zn(2+)</name>
        <dbReference type="ChEBI" id="CHEBI:29105"/>
    </ligand>
</feature>
<feature type="binding site" evidence="1">
    <location>
        <position position="432"/>
    </location>
    <ligand>
        <name>Zn(2+)</name>
        <dbReference type="ChEBI" id="CHEBI:29105"/>
    </ligand>
</feature>
<feature type="binding site" evidence="1">
    <location>
        <position position="438"/>
    </location>
    <ligand>
        <name>Zn(2+)</name>
        <dbReference type="ChEBI" id="CHEBI:29105"/>
    </ligand>
</feature>
<evidence type="ECO:0000255" key="1">
    <source>
        <dbReference type="HAMAP-Rule" id="MF_01588"/>
    </source>
</evidence>